<dbReference type="EC" id="6.1.1.9" evidence="1"/>
<dbReference type="EMBL" id="CP000699">
    <property type="protein sequence ID" value="ABQ67458.1"/>
    <property type="molecule type" value="Genomic_DNA"/>
</dbReference>
<dbReference type="SMR" id="A5V592"/>
<dbReference type="STRING" id="392499.Swit_1092"/>
<dbReference type="PaxDb" id="392499-Swit_1092"/>
<dbReference type="KEGG" id="swi:Swit_1092"/>
<dbReference type="eggNOG" id="COG0525">
    <property type="taxonomic scope" value="Bacteria"/>
</dbReference>
<dbReference type="HOGENOM" id="CLU_001493_0_2_5"/>
<dbReference type="OrthoDB" id="9810365at2"/>
<dbReference type="Proteomes" id="UP000001989">
    <property type="component" value="Chromosome"/>
</dbReference>
<dbReference type="GO" id="GO:0005829">
    <property type="term" value="C:cytosol"/>
    <property type="evidence" value="ECO:0007669"/>
    <property type="project" value="TreeGrafter"/>
</dbReference>
<dbReference type="GO" id="GO:0002161">
    <property type="term" value="F:aminoacyl-tRNA deacylase activity"/>
    <property type="evidence" value="ECO:0007669"/>
    <property type="project" value="InterPro"/>
</dbReference>
<dbReference type="GO" id="GO:0005524">
    <property type="term" value="F:ATP binding"/>
    <property type="evidence" value="ECO:0007669"/>
    <property type="project" value="UniProtKB-UniRule"/>
</dbReference>
<dbReference type="GO" id="GO:0004832">
    <property type="term" value="F:valine-tRNA ligase activity"/>
    <property type="evidence" value="ECO:0007669"/>
    <property type="project" value="UniProtKB-UniRule"/>
</dbReference>
<dbReference type="GO" id="GO:0006438">
    <property type="term" value="P:valyl-tRNA aminoacylation"/>
    <property type="evidence" value="ECO:0007669"/>
    <property type="project" value="UniProtKB-UniRule"/>
</dbReference>
<dbReference type="CDD" id="cd07962">
    <property type="entry name" value="Anticodon_Ia_Val"/>
    <property type="match status" value="1"/>
</dbReference>
<dbReference type="CDD" id="cd00817">
    <property type="entry name" value="ValRS_core"/>
    <property type="match status" value="1"/>
</dbReference>
<dbReference type="FunFam" id="1.10.287.380:FF:000001">
    <property type="entry name" value="Valine--tRNA ligase"/>
    <property type="match status" value="1"/>
</dbReference>
<dbReference type="FunFam" id="3.40.50.620:FF:000032">
    <property type="entry name" value="Valine--tRNA ligase"/>
    <property type="match status" value="1"/>
</dbReference>
<dbReference type="Gene3D" id="3.40.50.620">
    <property type="entry name" value="HUPs"/>
    <property type="match status" value="2"/>
</dbReference>
<dbReference type="Gene3D" id="1.10.730.10">
    <property type="entry name" value="Isoleucyl-tRNA Synthetase, Domain 1"/>
    <property type="match status" value="1"/>
</dbReference>
<dbReference type="Gene3D" id="1.10.287.380">
    <property type="entry name" value="Valyl-tRNA synthetase, C-terminal domain"/>
    <property type="match status" value="1"/>
</dbReference>
<dbReference type="Gene3D" id="3.90.740.10">
    <property type="entry name" value="Valyl/Leucyl/Isoleucyl-tRNA synthetase, editing domain"/>
    <property type="match status" value="1"/>
</dbReference>
<dbReference type="HAMAP" id="MF_02004">
    <property type="entry name" value="Val_tRNA_synth_type1"/>
    <property type="match status" value="1"/>
</dbReference>
<dbReference type="InterPro" id="IPR001412">
    <property type="entry name" value="aa-tRNA-synth_I_CS"/>
</dbReference>
<dbReference type="InterPro" id="IPR002300">
    <property type="entry name" value="aa-tRNA-synth_Ia"/>
</dbReference>
<dbReference type="InterPro" id="IPR033705">
    <property type="entry name" value="Anticodon_Ia_Val"/>
</dbReference>
<dbReference type="InterPro" id="IPR013155">
    <property type="entry name" value="M/V/L/I-tRNA-synth_anticd-bd"/>
</dbReference>
<dbReference type="InterPro" id="IPR014729">
    <property type="entry name" value="Rossmann-like_a/b/a_fold"/>
</dbReference>
<dbReference type="InterPro" id="IPR010978">
    <property type="entry name" value="tRNA-bd_arm"/>
</dbReference>
<dbReference type="InterPro" id="IPR009080">
    <property type="entry name" value="tRNAsynth_Ia_anticodon-bd"/>
</dbReference>
<dbReference type="InterPro" id="IPR037118">
    <property type="entry name" value="Val-tRNA_synth_C_sf"/>
</dbReference>
<dbReference type="InterPro" id="IPR019499">
    <property type="entry name" value="Val-tRNA_synth_tRNA-bd"/>
</dbReference>
<dbReference type="InterPro" id="IPR009008">
    <property type="entry name" value="Val/Leu/Ile-tRNA-synth_edit"/>
</dbReference>
<dbReference type="InterPro" id="IPR002303">
    <property type="entry name" value="Valyl-tRNA_ligase"/>
</dbReference>
<dbReference type="NCBIfam" id="NF004349">
    <property type="entry name" value="PRK05729.1"/>
    <property type="match status" value="1"/>
</dbReference>
<dbReference type="NCBIfam" id="TIGR00422">
    <property type="entry name" value="valS"/>
    <property type="match status" value="1"/>
</dbReference>
<dbReference type="PANTHER" id="PTHR11946:SF93">
    <property type="entry name" value="VALINE--TRNA LIGASE, CHLOROPLASTIC_MITOCHONDRIAL 2"/>
    <property type="match status" value="1"/>
</dbReference>
<dbReference type="PANTHER" id="PTHR11946">
    <property type="entry name" value="VALYL-TRNA SYNTHETASES"/>
    <property type="match status" value="1"/>
</dbReference>
<dbReference type="Pfam" id="PF08264">
    <property type="entry name" value="Anticodon_1"/>
    <property type="match status" value="1"/>
</dbReference>
<dbReference type="Pfam" id="PF00133">
    <property type="entry name" value="tRNA-synt_1"/>
    <property type="match status" value="1"/>
</dbReference>
<dbReference type="Pfam" id="PF10458">
    <property type="entry name" value="Val_tRNA-synt_C"/>
    <property type="match status" value="1"/>
</dbReference>
<dbReference type="PRINTS" id="PR00986">
    <property type="entry name" value="TRNASYNTHVAL"/>
</dbReference>
<dbReference type="SUPFAM" id="SSF47323">
    <property type="entry name" value="Anticodon-binding domain of a subclass of class I aminoacyl-tRNA synthetases"/>
    <property type="match status" value="1"/>
</dbReference>
<dbReference type="SUPFAM" id="SSF52374">
    <property type="entry name" value="Nucleotidylyl transferase"/>
    <property type="match status" value="1"/>
</dbReference>
<dbReference type="SUPFAM" id="SSF46589">
    <property type="entry name" value="tRNA-binding arm"/>
    <property type="match status" value="1"/>
</dbReference>
<dbReference type="SUPFAM" id="SSF50677">
    <property type="entry name" value="ValRS/IleRS/LeuRS editing domain"/>
    <property type="match status" value="1"/>
</dbReference>
<dbReference type="PROSITE" id="PS00178">
    <property type="entry name" value="AA_TRNA_LIGASE_I"/>
    <property type="match status" value="1"/>
</dbReference>
<gene>
    <name evidence="1" type="primary">valS</name>
    <name type="ordered locus">Swit_1092</name>
</gene>
<sequence>MTIDKTFDPAAIEARWYAHWEDNGLFRPERPEAEPYTIVIPPPNVTGSLHIGHALDDTLQDVLIRHARLKGKDALWVVGTDHAGIATQMVVERQLDAKGQKRTDFTREQFIAKVWEWKEESGGTITRQLRRLGASCDWANERFTMDEGFSKAVLKVFVDLYNQGLLYRDKRLVNWDPGLKTAISDLEVETKEVQGSFWHFSYPLADGSGAISVATTRPETMLADMAVAVNPEDGRYRALIGKSVKLPITGRLIPIVADEHADPELGSGAVKITPGHDFNDFEVGKRAGFKPADMLNMLDAEAKVVQTADGLIPADYLGLDRFEARRKVVAAIEAEGRLEKVEDRVIQTPYGDRSNAVIEPWLTDQWYVDAETLAKPAIEAVRSGAIRVVPESWTKTYYNWLDNIQPWCVSRQLWWGHQIPAWYDADGQVYVAEDEAAASALAGGKALTRDSDVLDTWFSSALWPFGTIGWPDQAGQQPPEAYQAGAAGKASKLQRHYPNDVLISGFDILFFWDARMIMQGLHFMGEVPFRTLYLHGLVRAADGSKMSKSKGNTVDPLGLIDKYGADALRFTLTAMESQGRDIKLDEKRVEGYRNFATKLWNAARFAQGNGIGASTTIEPPAAELAVNRWIIAETVRTVQALDLAIADLRYDESANTIYQFVWASFCDWYLELIKPVLAEGADQGQAAETRAVAGWVLDQILVMLHPFMPFITEELWHALGRRDYDIIVAKWPMADARAIDPAAQQEIDWLIRMVGEVRAARTGLNVPPGARLPAYARGASEETRRRLAANAVAIARMARIDLAEGEAPAGGAAQVVVDEATYVLPLEGVIDLDAERARLAKGIAAAEKERDGLAARLGNPAFVEKAKPEAVEKARADHAEKSLEAEQLGAALARLG</sequence>
<accession>A5V592</accession>
<evidence type="ECO:0000255" key="1">
    <source>
        <dbReference type="HAMAP-Rule" id="MF_02004"/>
    </source>
</evidence>
<keyword id="KW-0030">Aminoacyl-tRNA synthetase</keyword>
<keyword id="KW-0067">ATP-binding</keyword>
<keyword id="KW-0175">Coiled coil</keyword>
<keyword id="KW-0963">Cytoplasm</keyword>
<keyword id="KW-0436">Ligase</keyword>
<keyword id="KW-0547">Nucleotide-binding</keyword>
<keyword id="KW-0648">Protein biosynthesis</keyword>
<keyword id="KW-1185">Reference proteome</keyword>
<feature type="chain" id="PRO_1000022175" description="Valine--tRNA ligase">
    <location>
        <begin position="1"/>
        <end position="896"/>
    </location>
</feature>
<feature type="coiled-coil region" evidence="1">
    <location>
        <begin position="831"/>
        <end position="857"/>
    </location>
</feature>
<feature type="short sequence motif" description="'HIGH' region">
    <location>
        <begin position="43"/>
        <end position="53"/>
    </location>
</feature>
<feature type="short sequence motif" description="'KMSKS' region">
    <location>
        <begin position="545"/>
        <end position="549"/>
    </location>
</feature>
<feature type="binding site" evidence="1">
    <location>
        <position position="548"/>
    </location>
    <ligand>
        <name>ATP</name>
        <dbReference type="ChEBI" id="CHEBI:30616"/>
    </ligand>
</feature>
<reference key="1">
    <citation type="journal article" date="2010" name="J. Bacteriol.">
        <title>Genome sequence of the dioxin-mineralizing bacterium Sphingomonas wittichii RW1.</title>
        <authorList>
            <person name="Miller T.R."/>
            <person name="Delcher A.L."/>
            <person name="Salzberg S.L."/>
            <person name="Saunders E."/>
            <person name="Detter J.C."/>
            <person name="Halden R.U."/>
        </authorList>
    </citation>
    <scope>NUCLEOTIDE SEQUENCE [LARGE SCALE GENOMIC DNA]</scope>
    <source>
        <strain>DSM 6014 / CCUG 31198 / JCM 15750 / NBRC 105917 / EY 4224 / RW1</strain>
    </source>
</reference>
<proteinExistence type="inferred from homology"/>
<comment type="function">
    <text evidence="1">Catalyzes the attachment of valine to tRNA(Val). As ValRS can inadvertently accommodate and process structurally similar amino acids such as threonine, to avoid such errors, it has a 'posttransfer' editing activity that hydrolyzes mischarged Thr-tRNA(Val) in a tRNA-dependent manner.</text>
</comment>
<comment type="catalytic activity">
    <reaction evidence="1">
        <text>tRNA(Val) + L-valine + ATP = L-valyl-tRNA(Val) + AMP + diphosphate</text>
        <dbReference type="Rhea" id="RHEA:10704"/>
        <dbReference type="Rhea" id="RHEA-COMP:9672"/>
        <dbReference type="Rhea" id="RHEA-COMP:9708"/>
        <dbReference type="ChEBI" id="CHEBI:30616"/>
        <dbReference type="ChEBI" id="CHEBI:33019"/>
        <dbReference type="ChEBI" id="CHEBI:57762"/>
        <dbReference type="ChEBI" id="CHEBI:78442"/>
        <dbReference type="ChEBI" id="CHEBI:78537"/>
        <dbReference type="ChEBI" id="CHEBI:456215"/>
        <dbReference type="EC" id="6.1.1.9"/>
    </reaction>
</comment>
<comment type="subunit">
    <text evidence="1">Monomer.</text>
</comment>
<comment type="subcellular location">
    <subcellularLocation>
        <location evidence="1">Cytoplasm</location>
    </subcellularLocation>
</comment>
<comment type="domain">
    <text evidence="1">ValRS has two distinct active sites: one for aminoacylation and one for editing. The misactivated threonine is translocated from the active site to the editing site.</text>
</comment>
<comment type="domain">
    <text evidence="1">The C-terminal coiled-coil domain is crucial for aminoacylation activity.</text>
</comment>
<comment type="similarity">
    <text evidence="1">Belongs to the class-I aminoacyl-tRNA synthetase family. ValS type 1 subfamily.</text>
</comment>
<organism>
    <name type="scientific">Rhizorhabdus wittichii (strain DSM 6014 / CCUG 31198 / JCM 15750 / NBRC 105917 / EY 4224 / RW1)</name>
    <name type="common">Sphingomonas wittichii</name>
    <dbReference type="NCBI Taxonomy" id="392499"/>
    <lineage>
        <taxon>Bacteria</taxon>
        <taxon>Pseudomonadati</taxon>
        <taxon>Pseudomonadota</taxon>
        <taxon>Alphaproteobacteria</taxon>
        <taxon>Sphingomonadales</taxon>
        <taxon>Sphingomonadaceae</taxon>
        <taxon>Rhizorhabdus</taxon>
    </lineage>
</organism>
<protein>
    <recommendedName>
        <fullName evidence="1">Valine--tRNA ligase</fullName>
        <ecNumber evidence="1">6.1.1.9</ecNumber>
    </recommendedName>
    <alternativeName>
        <fullName evidence="1">Valyl-tRNA synthetase</fullName>
        <shortName evidence="1">ValRS</shortName>
    </alternativeName>
</protein>
<name>SYV_RHIWR</name>